<sequence length="26" mass="2824">MGTTTMGVKLDDATRERIKSAASRID</sequence>
<name>PUTA_KLEPN</name>
<feature type="chain" id="PRO_0000056526" description="Bifunctional protein PutA">
    <location>
        <begin position="1"/>
        <end position="26" status="greater than"/>
    </location>
</feature>
<feature type="region of interest" description="Disordered" evidence="1">
    <location>
        <begin position="1"/>
        <end position="26"/>
    </location>
</feature>
<feature type="compositionally biased region" description="Basic and acidic residues" evidence="1">
    <location>
        <begin position="9"/>
        <end position="26"/>
    </location>
</feature>
<feature type="non-terminal residue">
    <location>
        <position position="26"/>
    </location>
</feature>
<comment type="function">
    <text>Oxidizes proline to glutamate for use as a carbon and nitrogen source and also function as a transcriptional repressor of the put operon.</text>
</comment>
<comment type="catalytic activity">
    <reaction>
        <text>L-proline + a quinone = (S)-1-pyrroline-5-carboxylate + a quinol + H(+)</text>
        <dbReference type="Rhea" id="RHEA:23784"/>
        <dbReference type="ChEBI" id="CHEBI:15378"/>
        <dbReference type="ChEBI" id="CHEBI:17388"/>
        <dbReference type="ChEBI" id="CHEBI:24646"/>
        <dbReference type="ChEBI" id="CHEBI:60039"/>
        <dbReference type="ChEBI" id="CHEBI:132124"/>
        <dbReference type="EC" id="1.5.5.2"/>
    </reaction>
</comment>
<comment type="catalytic activity">
    <reaction>
        <text>L-glutamate 5-semialdehyde + NAD(+) + H2O = L-glutamate + NADH + 2 H(+)</text>
        <dbReference type="Rhea" id="RHEA:30235"/>
        <dbReference type="ChEBI" id="CHEBI:15377"/>
        <dbReference type="ChEBI" id="CHEBI:15378"/>
        <dbReference type="ChEBI" id="CHEBI:29985"/>
        <dbReference type="ChEBI" id="CHEBI:57540"/>
        <dbReference type="ChEBI" id="CHEBI:57945"/>
        <dbReference type="ChEBI" id="CHEBI:58066"/>
        <dbReference type="EC" id="1.2.1.88"/>
    </reaction>
</comment>
<comment type="cofactor">
    <cofactor>
        <name>FAD</name>
        <dbReference type="ChEBI" id="CHEBI:57692"/>
    </cofactor>
</comment>
<comment type="pathway">
    <text>Amino-acid degradation; L-proline degradation into L-glutamate; L-glutamate from L-proline: step 1/2.</text>
</comment>
<comment type="pathway">
    <text>Amino-acid degradation; L-proline degradation into L-glutamate; L-glutamate from L-proline: step 2/2.</text>
</comment>
<comment type="induction">
    <text>By proline, autorepression and catabolite repression, and is potentially nitrogen controlled.</text>
</comment>
<gene>
    <name type="primary">putA</name>
</gene>
<proteinExistence type="evidence at transcript level"/>
<keyword id="KW-0238">DNA-binding</keyword>
<keyword id="KW-0274">FAD</keyword>
<keyword id="KW-0285">Flavoprotein</keyword>
<keyword id="KW-0511">Multifunctional enzyme</keyword>
<keyword id="KW-0520">NAD</keyword>
<keyword id="KW-0560">Oxidoreductase</keyword>
<keyword id="KW-0642">Proline metabolism</keyword>
<keyword id="KW-0678">Repressor</keyword>
<keyword id="KW-0804">Transcription</keyword>
<keyword id="KW-0805">Transcription regulation</keyword>
<dbReference type="EC" id="1.5.5.2"/>
<dbReference type="EC" id="1.2.1.88"/>
<dbReference type="EMBL" id="M63160">
    <property type="protein sequence ID" value="AAA25139.1"/>
    <property type="molecule type" value="Genomic_DNA"/>
</dbReference>
<dbReference type="SMR" id="P23725"/>
<dbReference type="UniPathway" id="UPA00261">
    <property type="reaction ID" value="UER00373"/>
</dbReference>
<dbReference type="UniPathway" id="UPA00261">
    <property type="reaction ID" value="UER00374"/>
</dbReference>
<dbReference type="GO" id="GO:0003842">
    <property type="term" value="F:1-pyrroline-5-carboxylate dehydrogenase activity"/>
    <property type="evidence" value="ECO:0007669"/>
    <property type="project" value="UniProtKB-EC"/>
</dbReference>
<dbReference type="GO" id="GO:0003677">
    <property type="term" value="F:DNA binding"/>
    <property type="evidence" value="ECO:0007669"/>
    <property type="project" value="UniProtKB-KW"/>
</dbReference>
<dbReference type="GO" id="GO:0004657">
    <property type="term" value="F:proline dehydrogenase activity"/>
    <property type="evidence" value="ECO:0007669"/>
    <property type="project" value="UniProtKB-EC"/>
</dbReference>
<dbReference type="GO" id="GO:0010133">
    <property type="term" value="P:proline catabolic process to glutamate"/>
    <property type="evidence" value="ECO:0007669"/>
    <property type="project" value="UniProtKB-UniPathway"/>
</dbReference>
<evidence type="ECO:0000256" key="1">
    <source>
        <dbReference type="SAM" id="MobiDB-lite"/>
    </source>
</evidence>
<reference key="1">
    <citation type="journal article" date="1991" name="J. Bacteriol.">
        <title>Regulation of proline utilization in enteric bacteria: cloning and characterization of the Klebsiella put control region.</title>
        <authorList>
            <person name="Chen L.M."/>
            <person name="Maloy S."/>
        </authorList>
    </citation>
    <scope>NUCLEOTIDE SEQUENCE [GENOMIC DNA]</scope>
</reference>
<accession>P23725</accession>
<protein>
    <recommendedName>
        <fullName>Bifunctional protein PutA</fullName>
    </recommendedName>
    <domain>
        <recommendedName>
            <fullName>Proline dehydrogenase</fullName>
            <ecNumber>1.5.5.2</ecNumber>
        </recommendedName>
        <alternativeName>
            <fullName>Proline oxidase</fullName>
        </alternativeName>
    </domain>
    <domain>
        <recommendedName>
            <fullName>Delta-1-pyrroline-5-carboxylate dehydrogenase</fullName>
            <shortName>P5C dehydrogenase</shortName>
            <ecNumber>1.2.1.88</ecNumber>
        </recommendedName>
        <alternativeName>
            <fullName>L-glutamate gamma-semialdehyde dehydrogenase</fullName>
        </alternativeName>
    </domain>
</protein>
<organism>
    <name type="scientific">Klebsiella pneumoniae</name>
    <dbReference type="NCBI Taxonomy" id="573"/>
    <lineage>
        <taxon>Bacteria</taxon>
        <taxon>Pseudomonadati</taxon>
        <taxon>Pseudomonadota</taxon>
        <taxon>Gammaproteobacteria</taxon>
        <taxon>Enterobacterales</taxon>
        <taxon>Enterobacteriaceae</taxon>
        <taxon>Klebsiella/Raoultella group</taxon>
        <taxon>Klebsiella</taxon>
        <taxon>Klebsiella pneumoniae complex</taxon>
    </lineage>
</organism>